<gene>
    <name type="primary">DUX5</name>
</gene>
<reference key="1">
    <citation type="journal article" date="2001" name="Gene">
        <title>Active genes in junk DNA? Characterization of DUX genes embedded within 3.3 kb repeated elements.</title>
        <authorList>
            <person name="Beckers M.-C."/>
            <person name="Gabrieels J."/>
            <person name="van der Maarel S."/>
            <person name="De Vriese A."/>
            <person name="Frants R.R."/>
            <person name="Collen D."/>
            <person name="Belayew A."/>
        </authorList>
    </citation>
    <scope>NUCLEOTIDE SEQUENCE [GENOMIC DNA]</scope>
    <scope>ALTERNATIVE SPLICING</scope>
    <scope>TISSUE SPECIFICITY</scope>
    <scope>DEVELOPMENTAL STAGE</scope>
</reference>
<name>DUX5_HUMAN</name>
<comment type="subcellular location">
    <subcellularLocation>
        <location evidence="4">Nucleus</location>
    </subcellularLocation>
</comment>
<comment type="alternative products">
    <event type="alternative splicing"/>
    <isoform>
        <id>Q96PT3-1</id>
        <name>1</name>
        <sequence type="displayed"/>
    </isoform>
    <isoform>
        <id>Q96PT3-2</id>
        <name>2</name>
        <sequence type="described" ref="VSP_020959"/>
    </isoform>
</comment>
<comment type="tissue specificity">
    <text evidence="3">Expressed in hepatoma Hep3B cells.</text>
</comment>
<comment type="developmental stage">
    <text evidence="3">Expressed in fetal tissue.</text>
</comment>
<comment type="miscellaneous">
    <text>DUX genes are present in 3.3-kilobase elements, a tandem repeat family scattered in the genome found on the short arms of all acrocentric chromosomes as well as on several other chromosomes. May be functional despite lack of introns and a poly(A) addition signal.</text>
</comment>
<comment type="similarity">
    <text evidence="4">Belongs to the paired homeobox family.</text>
</comment>
<protein>
    <recommendedName>
        <fullName>Double homeobox protein 5</fullName>
    </recommendedName>
</protein>
<proteinExistence type="evidence at transcript level"/>
<dbReference type="EMBL" id="AF133131">
    <property type="protein sequence ID" value="AAD33598.1"/>
    <property type="molecule type" value="Genomic_DNA"/>
</dbReference>
<dbReference type="EMBL" id="AF133131">
    <property type="protein sequence ID" value="AAL02243.1"/>
    <property type="molecule type" value="Genomic_DNA"/>
</dbReference>
<dbReference type="RefSeq" id="NP_036278.1">
    <molecule id="Q96PT3-2"/>
    <property type="nucleotide sequence ID" value="NM_012146.1"/>
</dbReference>
<dbReference type="RefSeq" id="NP_036281.2">
    <molecule id="Q96PT3-1"/>
    <property type="nucleotide sequence ID" value="NM_012149.2"/>
</dbReference>
<dbReference type="SMR" id="Q96PT3"/>
<dbReference type="BioGRID" id="117753">
    <property type="interactions" value="6"/>
</dbReference>
<dbReference type="FunCoup" id="Q96PT3">
    <property type="interactions" value="23"/>
</dbReference>
<dbReference type="BioMuta" id="HGNC:3083"/>
<dbReference type="DMDM" id="74717113"/>
<dbReference type="MassIVE" id="Q96PT3"/>
<dbReference type="DNASU" id="26581"/>
<dbReference type="GeneID" id="26581"/>
<dbReference type="KEGG" id="hsa:26581"/>
<dbReference type="KEGG" id="hsa:26584"/>
<dbReference type="AGR" id="HGNC:3079"/>
<dbReference type="AGR" id="HGNC:3083"/>
<dbReference type="CTD" id="26581"/>
<dbReference type="CTD" id="26584"/>
<dbReference type="GeneCards" id="DUX5"/>
<dbReference type="HGNC" id="HGNC:3083">
    <property type="gene designation" value="DUX5"/>
</dbReference>
<dbReference type="MIM" id="611444">
    <property type="type" value="gene"/>
</dbReference>
<dbReference type="neXtProt" id="NX_Q96PT3"/>
<dbReference type="PharmGKB" id="PA27535"/>
<dbReference type="PharmGKB" id="PA27539"/>
<dbReference type="InParanoid" id="Q96PT3"/>
<dbReference type="PAN-GO" id="Q96PT3">
    <property type="GO annotations" value="4 GO annotations based on evolutionary models"/>
</dbReference>
<dbReference type="PhylomeDB" id="Q96PT3"/>
<dbReference type="Pharos" id="Q96PT3">
    <property type="development level" value="Tdark"/>
</dbReference>
<dbReference type="PRO" id="PR:Q96PT3"/>
<dbReference type="Proteomes" id="UP000005640">
    <property type="component" value="Unplaced"/>
</dbReference>
<dbReference type="RNAct" id="Q96PT3">
    <property type="molecule type" value="protein"/>
</dbReference>
<dbReference type="GO" id="GO:0005634">
    <property type="term" value="C:nucleus"/>
    <property type="evidence" value="ECO:0000318"/>
    <property type="project" value="GO_Central"/>
</dbReference>
<dbReference type="GO" id="GO:0000981">
    <property type="term" value="F:DNA-binding transcription factor activity, RNA polymerase II-specific"/>
    <property type="evidence" value="ECO:0000318"/>
    <property type="project" value="GO_Central"/>
</dbReference>
<dbReference type="GO" id="GO:0000977">
    <property type="term" value="F:RNA polymerase II transcription regulatory region sequence-specific DNA binding"/>
    <property type="evidence" value="ECO:0000318"/>
    <property type="project" value="GO_Central"/>
</dbReference>
<dbReference type="GO" id="GO:0006357">
    <property type="term" value="P:regulation of transcription by RNA polymerase II"/>
    <property type="evidence" value="ECO:0000318"/>
    <property type="project" value="GO_Central"/>
</dbReference>
<dbReference type="CDD" id="cd00086">
    <property type="entry name" value="homeodomain"/>
    <property type="match status" value="2"/>
</dbReference>
<dbReference type="FunFam" id="1.10.10.60:FF:000325">
    <property type="entry name" value="Double homeobox protein 4"/>
    <property type="match status" value="1"/>
</dbReference>
<dbReference type="FunFam" id="1.10.10.60:FF:000354">
    <property type="entry name" value="Double homeobox protein 4"/>
    <property type="match status" value="1"/>
</dbReference>
<dbReference type="Gene3D" id="1.10.10.60">
    <property type="entry name" value="Homeodomain-like"/>
    <property type="match status" value="2"/>
</dbReference>
<dbReference type="InterPro" id="IPR001356">
    <property type="entry name" value="HD"/>
</dbReference>
<dbReference type="InterPro" id="IPR017970">
    <property type="entry name" value="Homeobox_CS"/>
</dbReference>
<dbReference type="InterPro" id="IPR051306">
    <property type="entry name" value="Homeobox_regulator"/>
</dbReference>
<dbReference type="InterPro" id="IPR009057">
    <property type="entry name" value="Homeodomain-like_sf"/>
</dbReference>
<dbReference type="InterPro" id="IPR000047">
    <property type="entry name" value="HTH_motif"/>
</dbReference>
<dbReference type="PANTHER" id="PTHR46123:SF3">
    <property type="entry name" value="DOUBLE HOMEOBOX PROTEIN 1-RELATED"/>
    <property type="match status" value="1"/>
</dbReference>
<dbReference type="PANTHER" id="PTHR46123">
    <property type="entry name" value="MIX-TYPE HOMEOBOX GENE 1-RELATED"/>
    <property type="match status" value="1"/>
</dbReference>
<dbReference type="Pfam" id="PF00046">
    <property type="entry name" value="Homeodomain"/>
    <property type="match status" value="2"/>
</dbReference>
<dbReference type="PRINTS" id="PR00031">
    <property type="entry name" value="HTHREPRESSR"/>
</dbReference>
<dbReference type="SMART" id="SM00389">
    <property type="entry name" value="HOX"/>
    <property type="match status" value="2"/>
</dbReference>
<dbReference type="SUPFAM" id="SSF46689">
    <property type="entry name" value="Homeodomain-like"/>
    <property type="match status" value="2"/>
</dbReference>
<dbReference type="PROSITE" id="PS00027">
    <property type="entry name" value="HOMEOBOX_1"/>
    <property type="match status" value="1"/>
</dbReference>
<dbReference type="PROSITE" id="PS50071">
    <property type="entry name" value="HOMEOBOX_2"/>
    <property type="match status" value="2"/>
</dbReference>
<accession>Q96PT3</accession>
<evidence type="ECO:0000255" key="1">
    <source>
        <dbReference type="PROSITE-ProRule" id="PRU00108"/>
    </source>
</evidence>
<evidence type="ECO:0000256" key="2">
    <source>
        <dbReference type="SAM" id="MobiDB-lite"/>
    </source>
</evidence>
<evidence type="ECO:0000269" key="3">
    <source>
    </source>
</evidence>
<evidence type="ECO:0000305" key="4"/>
<keyword id="KW-0025">Alternative splicing</keyword>
<keyword id="KW-0238">DNA-binding</keyword>
<keyword id="KW-0371">Homeobox</keyword>
<keyword id="KW-0539">Nucleus</keyword>
<keyword id="KW-1185">Reference proteome</keyword>
<keyword id="KW-0677">Repeat</keyword>
<sequence>MPAEVHGSPPASLCPCQSVKFRPGLPEMALLTALDDTLPEEAQGPGRRMILLSTPSQSDALRACFERNLYPGIATKEELAQGIDIPEPRVQIWFQNERSCQLRQHRRQSRPWPGRRDPQKGRRKRTAITGSQTALLLRAFEKDRFPGIAAREELARETGLPESRIQIWFQNRRARHRGQSGRAPTQASIRCNAAPIG</sequence>
<feature type="chain" id="PRO_0000252414" description="Double homeobox protein 5">
    <location>
        <begin position="1"/>
        <end position="197"/>
    </location>
</feature>
<feature type="DNA-binding region" description="Homeobox 1" evidence="1">
    <location>
        <begin position="46"/>
        <end position="105"/>
    </location>
</feature>
<feature type="DNA-binding region" description="Homeobox 2" evidence="1">
    <location>
        <begin position="121"/>
        <end position="180"/>
    </location>
</feature>
<feature type="region of interest" description="Disordered" evidence="2">
    <location>
        <begin position="101"/>
        <end position="127"/>
    </location>
</feature>
<feature type="splice variant" id="VSP_020959" description="In isoform 2." evidence="4">
    <location>
        <begin position="1"/>
        <end position="27"/>
    </location>
</feature>
<feature type="sequence variant" id="VAR_059347" description="In dbSNP:rs10865697.">
    <original>A</original>
    <variation>V</variation>
    <location>
        <position position="60"/>
    </location>
</feature>
<feature type="sequence variant" id="VAR_059348" description="In dbSNP:rs9755233.">
    <original>P</original>
    <variation>L</variation>
    <location>
        <position position="118"/>
    </location>
</feature>
<feature type="sequence variant" id="VAR_059349" description="In dbSNP:rs12374009.">
    <original>Q</original>
    <variation>P</variation>
    <location>
        <position position="119"/>
    </location>
</feature>
<feature type="sequence variant" id="VAR_059350" description="In dbSNP:rs12632317.">
    <original>S</original>
    <variation>A</variation>
    <location>
        <position position="180"/>
    </location>
</feature>
<feature type="sequence variant" id="VAR_059351" description="In dbSNP:rs12632317.">
    <original>S</original>
    <variation>T</variation>
    <location>
        <position position="180"/>
    </location>
</feature>
<organism>
    <name type="scientific">Homo sapiens</name>
    <name type="common">Human</name>
    <dbReference type="NCBI Taxonomy" id="9606"/>
    <lineage>
        <taxon>Eukaryota</taxon>
        <taxon>Metazoa</taxon>
        <taxon>Chordata</taxon>
        <taxon>Craniata</taxon>
        <taxon>Vertebrata</taxon>
        <taxon>Euteleostomi</taxon>
        <taxon>Mammalia</taxon>
        <taxon>Eutheria</taxon>
        <taxon>Euarchontoglires</taxon>
        <taxon>Primates</taxon>
        <taxon>Haplorrhini</taxon>
        <taxon>Catarrhini</taxon>
        <taxon>Hominidae</taxon>
        <taxon>Homo</taxon>
    </lineage>
</organism>